<gene>
    <name evidence="6" type="primary">cnp-2</name>
    <name evidence="6" type="ORF">Y46G5A.10</name>
</gene>
<feature type="chain" id="PRO_0000436778" description="Calcineurin-interacting protein 2" evidence="4">
    <location>
        <begin position="1"/>
        <end position="732"/>
    </location>
</feature>
<feature type="region of interest" description="Disordered" evidence="1">
    <location>
        <begin position="1"/>
        <end position="24"/>
    </location>
</feature>
<feature type="region of interest" description="Disordered" evidence="1">
    <location>
        <begin position="115"/>
        <end position="169"/>
    </location>
</feature>
<feature type="region of interest" description="Disordered" evidence="1">
    <location>
        <begin position="181"/>
        <end position="232"/>
    </location>
</feature>
<feature type="region of interest" description="Disordered" evidence="1">
    <location>
        <begin position="310"/>
        <end position="351"/>
    </location>
</feature>
<feature type="region of interest" description="Disordered" evidence="1">
    <location>
        <begin position="372"/>
        <end position="397"/>
    </location>
</feature>
<feature type="region of interest" description="Disordered" evidence="1">
    <location>
        <begin position="426"/>
        <end position="708"/>
    </location>
</feature>
<feature type="compositionally biased region" description="Polar residues" evidence="1">
    <location>
        <begin position="8"/>
        <end position="17"/>
    </location>
</feature>
<feature type="compositionally biased region" description="Basic and acidic residues" evidence="1">
    <location>
        <begin position="117"/>
        <end position="129"/>
    </location>
</feature>
<feature type="compositionally biased region" description="Polar residues" evidence="1">
    <location>
        <begin position="151"/>
        <end position="163"/>
    </location>
</feature>
<feature type="compositionally biased region" description="Polar residues" evidence="1">
    <location>
        <begin position="189"/>
        <end position="208"/>
    </location>
</feature>
<feature type="compositionally biased region" description="Low complexity" evidence="1">
    <location>
        <begin position="312"/>
        <end position="323"/>
    </location>
</feature>
<feature type="compositionally biased region" description="Polar residues" evidence="1">
    <location>
        <begin position="324"/>
        <end position="351"/>
    </location>
</feature>
<feature type="compositionally biased region" description="Polar residues" evidence="1">
    <location>
        <begin position="426"/>
        <end position="439"/>
    </location>
</feature>
<feature type="compositionally biased region" description="Basic and acidic residues" evidence="1">
    <location>
        <begin position="526"/>
        <end position="538"/>
    </location>
</feature>
<feature type="compositionally biased region" description="Basic and acidic residues" evidence="1">
    <location>
        <begin position="546"/>
        <end position="557"/>
    </location>
</feature>
<feature type="compositionally biased region" description="Polar residues" evidence="1">
    <location>
        <begin position="607"/>
        <end position="619"/>
    </location>
</feature>
<feature type="compositionally biased region" description="Low complexity" evidence="1">
    <location>
        <begin position="688"/>
        <end position="705"/>
    </location>
</feature>
<accession>Q9U2D6</accession>
<dbReference type="EMBL" id="BX284602">
    <property type="protein sequence ID" value="CAB60376.3"/>
    <property type="molecule type" value="Genomic_DNA"/>
</dbReference>
<dbReference type="RefSeq" id="NP_496715.3">
    <property type="nucleotide sequence ID" value="NM_064314.5"/>
</dbReference>
<dbReference type="DIP" id="DIP-26531N"/>
<dbReference type="IntAct" id="Q9U2D6">
    <property type="interactions" value="5"/>
</dbReference>
<dbReference type="STRING" id="6239.Y46G5A.10.1"/>
<dbReference type="PaxDb" id="6239-Y46G5A.10"/>
<dbReference type="PeptideAtlas" id="Q9U2D6"/>
<dbReference type="EnsemblMetazoa" id="Y46G5A.10.1">
    <property type="protein sequence ID" value="Y46G5A.10.1"/>
    <property type="gene ID" value="WBGene00012901"/>
</dbReference>
<dbReference type="GeneID" id="174907"/>
<dbReference type="KEGG" id="cel:CELE_Y46G5A.10"/>
<dbReference type="UCSC" id="Y46G5A.10">
    <property type="organism name" value="c. elegans"/>
</dbReference>
<dbReference type="AGR" id="WB:WBGene00012901"/>
<dbReference type="CTD" id="174907"/>
<dbReference type="WormBase" id="Y46G5A.10">
    <property type="protein sequence ID" value="CE37941"/>
    <property type="gene ID" value="WBGene00012901"/>
    <property type="gene designation" value="cnp-2"/>
</dbReference>
<dbReference type="eggNOG" id="ENOG502QWCT">
    <property type="taxonomic scope" value="Eukaryota"/>
</dbReference>
<dbReference type="GeneTree" id="ENSGT00940000167855"/>
<dbReference type="HOGENOM" id="CLU_378669_0_0_1"/>
<dbReference type="InParanoid" id="Q9U2D6"/>
<dbReference type="OMA" id="RENTWTP"/>
<dbReference type="OrthoDB" id="5804272at2759"/>
<dbReference type="Reactome" id="R-CEL-5621480">
    <property type="pathway name" value="Dectin-2 family"/>
</dbReference>
<dbReference type="Reactome" id="R-CEL-913709">
    <property type="pathway name" value="O-linked glycosylation of mucins"/>
</dbReference>
<dbReference type="PRO" id="PR:Q9U2D6"/>
<dbReference type="Proteomes" id="UP000001940">
    <property type="component" value="Chromosome II"/>
</dbReference>
<dbReference type="Bgee" id="WBGene00012901">
    <property type="expression patterns" value="Expressed in material anatomical entity and 5 other cell types or tissues"/>
</dbReference>
<dbReference type="PANTHER" id="PTHR10006:SF19">
    <property type="entry name" value="MUCIN-1"/>
    <property type="match status" value="1"/>
</dbReference>
<dbReference type="PANTHER" id="PTHR10006">
    <property type="entry name" value="MUCIN-1-RELATED"/>
    <property type="match status" value="1"/>
</dbReference>
<protein>
    <recommendedName>
        <fullName evidence="3">Calcineurin-interacting protein 2</fullName>
    </recommendedName>
    <alternativeName>
        <fullName evidence="6">Calcineurin binding protein 2</fullName>
    </alternativeName>
</protein>
<keyword id="KW-1185">Reference proteome</keyword>
<name>CNP2_CAEEL</name>
<proteinExistence type="evidence at protein level"/>
<sequence length="732" mass="84401">MNRGYDSYNRSRSTSSRPLDREPYHAVSELYTKEITHTPIGPASDLPPEILDILKENPRATPQYTPPLIRHRENTWTPENYPIVRVPSAQFTDVMTELYDYHEVEKYTHRSVTPDYEPLRKEPELKEQKLPTYQVIPPTPEKNTPRHQHHSGITLSPSDSSRTLGALPKKPPMYEEYLQMQKKDENRNIPRQVSSADSQRTIRNNNELSHLRHIDSSSSSEASEPAKDLDDRERYVYTHDVYVDSTTGRPFTPGREDVREKKNCDKLKINVYFKPPHPPVEITYKLDEIEIEKNENIVVTKLRPSRSDTILSRSVSTSPSSVTDNIPKTSTSRIPSSENPKTMEHTTTSRRFPTQTSILRKEHEIVQVPLHRSQSLRQSRISEHSKRSLGKTTSTVSTERPIPIHVVEETSSIDMDVVFPKMPHHQTVTNVRVPSSRGSAISRAHSEHRRSIDRSEPRHHHRHHVHSETPELPYTRGISKTPSVREYNVKREGQRSPSRSHRSERSPSEVRIPVTTTHTRPIAKRQSPEELDYGRFADKSQQNRFPGDHQAREEDLPYTRGISKTPSNQDSRSERTPCSDIHIPYNNPEKERAYQQSERSSYRSHKSVTPSEKSLPRNSETPELHYTRGISKTPSDRVEKSRYLSRGVSTPHTPSEVHIPYNNPEKERAYQQSHRPSSPKRRPSGRTNSPNKSSSSSKARPSAAPLEEIVHIKERYERDETIRRFFPTTTAV</sequence>
<reference evidence="5" key="1">
    <citation type="journal article" date="1998" name="Science">
        <title>Genome sequence of the nematode C. elegans: a platform for investigating biology.</title>
        <authorList>
            <consortium name="The C. elegans sequencing consortium"/>
        </authorList>
    </citation>
    <scope>NUCLEOTIDE SEQUENCE [LARGE SCALE GENOMIC DNA]</scope>
    <source>
        <strain evidence="5">Bristol N2</strain>
    </source>
</reference>
<reference evidence="4" key="2">
    <citation type="journal article" date="2008" name="BMB Rep.">
        <title>Novel calcineurin interacting protein-2: the functional characterization of CNP-2 in Caenorhabditis elegans.</title>
        <authorList>
            <person name="Xianglan C."/>
            <person name="Ko K.M."/>
            <person name="Singaravelu G."/>
            <person name="Ahnn J."/>
        </authorList>
    </citation>
    <scope>INTERACTION WITH TAX-6</scope>
    <scope>TISSUE SPECIFICITY</scope>
    <scope>DEVELOPMENTAL STAGE</scope>
    <scope>DISRUPTION PHENOTYPE</scope>
</reference>
<organism evidence="5">
    <name type="scientific">Caenorhabditis elegans</name>
    <dbReference type="NCBI Taxonomy" id="6239"/>
    <lineage>
        <taxon>Eukaryota</taxon>
        <taxon>Metazoa</taxon>
        <taxon>Ecdysozoa</taxon>
        <taxon>Nematoda</taxon>
        <taxon>Chromadorea</taxon>
        <taxon>Rhabditida</taxon>
        <taxon>Rhabditina</taxon>
        <taxon>Rhabditomorpha</taxon>
        <taxon>Rhabditoidea</taxon>
        <taxon>Rhabditidae</taxon>
        <taxon>Peloderinae</taxon>
        <taxon>Caenorhabditis</taxon>
    </lineage>
</organism>
<evidence type="ECO:0000256" key="1">
    <source>
        <dbReference type="SAM" id="MobiDB-lite"/>
    </source>
</evidence>
<evidence type="ECO:0000269" key="2">
    <source>
    </source>
</evidence>
<evidence type="ECO:0000303" key="3">
    <source>
    </source>
</evidence>
<evidence type="ECO:0000305" key="4"/>
<evidence type="ECO:0000312" key="5">
    <source>
        <dbReference type="Proteomes" id="UP000001940"/>
    </source>
</evidence>
<evidence type="ECO:0000312" key="6">
    <source>
        <dbReference type="WormBase" id="Y46G5A.10"/>
    </source>
</evidence>
<comment type="subunit">
    <text evidence="2">Interacts with tax-6.</text>
</comment>
<comment type="tissue specificity">
    <text evidence="2">Expressed in intestine.</text>
</comment>
<comment type="developmental stage">
    <text evidence="2">Expressed from the gastrula stage throughout adulthood.</text>
</comment>
<comment type="disruption phenotype">
    <text evidence="2">RNAi-mediated knockdown results in no obvious phenotype.</text>
</comment>